<proteinExistence type="inferred from homology"/>
<name>ATPB_ERYLH</name>
<protein>
    <recommendedName>
        <fullName evidence="1">ATP synthase subunit beta</fullName>
        <ecNumber evidence="1">7.1.2.2</ecNumber>
    </recommendedName>
    <alternativeName>
        <fullName evidence="1">ATP synthase F1 sector subunit beta</fullName>
    </alternativeName>
    <alternativeName>
        <fullName evidence="1">F-ATPase subunit beta</fullName>
    </alternativeName>
</protein>
<accession>Q2N8Z2</accession>
<evidence type="ECO:0000255" key="1">
    <source>
        <dbReference type="HAMAP-Rule" id="MF_01347"/>
    </source>
</evidence>
<gene>
    <name evidence="1" type="primary">atpD</name>
    <name type="ordered locus">ELI_08785</name>
</gene>
<keyword id="KW-0066">ATP synthesis</keyword>
<keyword id="KW-0067">ATP-binding</keyword>
<keyword id="KW-0997">Cell inner membrane</keyword>
<keyword id="KW-1003">Cell membrane</keyword>
<keyword id="KW-0139">CF(1)</keyword>
<keyword id="KW-0375">Hydrogen ion transport</keyword>
<keyword id="KW-0406">Ion transport</keyword>
<keyword id="KW-0472">Membrane</keyword>
<keyword id="KW-0547">Nucleotide-binding</keyword>
<keyword id="KW-1185">Reference proteome</keyword>
<keyword id="KW-1278">Translocase</keyword>
<keyword id="KW-0813">Transport</keyword>
<sequence length="485" mass="51534">MATAPVLNQTTNGTISQVIGAVVDVQFPGELPAILTALETENGDTTLVLEVAQHLGENTVRTIAMDGTDGLVRGQEVINTGAQISVPVGPKTLGRIMNVVGEPIDMRGPVGADKANPIHAEAPAFVDQSTDAAILVTGIKVIDLLAPYAKGGKIGLFGGAGVGKTVLIQELINNIAKGHGGVSVFAGVGERTREGNDLYHEFLDAGVIAKNEAGEAISEGSKVALVFGQMNEPPGARARVALSGLTMAEYFRDEEGQDVLFFVDNIFRFTQAGSEVSALLGRIPSAVGYQPTLSTDMGNLQERITSTTKGSITSVQAIYVPADDLTDPAPATSFAHLDATTTLNRAISELGIYPAVDPLDSTSRVLEPRVVGQEHYETARKVQETLQKYKSLQDIIAILGMDELSEEDKLTVARARKIQKFLSQPFHVAEVFTGIPGCFVQIEDTVASFKAVVEGEYDHLPEQAFYMVGGIDDVVEKAKKMAEDA</sequence>
<organism>
    <name type="scientific">Erythrobacter litoralis (strain HTCC2594)</name>
    <dbReference type="NCBI Taxonomy" id="314225"/>
    <lineage>
        <taxon>Bacteria</taxon>
        <taxon>Pseudomonadati</taxon>
        <taxon>Pseudomonadota</taxon>
        <taxon>Alphaproteobacteria</taxon>
        <taxon>Sphingomonadales</taxon>
        <taxon>Erythrobacteraceae</taxon>
        <taxon>Erythrobacter/Porphyrobacter group</taxon>
        <taxon>Erythrobacter</taxon>
    </lineage>
</organism>
<feature type="chain" id="PRO_0000339528" description="ATP synthase subunit beta">
    <location>
        <begin position="1"/>
        <end position="485"/>
    </location>
</feature>
<feature type="binding site" evidence="1">
    <location>
        <begin position="158"/>
        <end position="165"/>
    </location>
    <ligand>
        <name>ATP</name>
        <dbReference type="ChEBI" id="CHEBI:30616"/>
    </ligand>
</feature>
<reference key="1">
    <citation type="journal article" date="2009" name="J. Bacteriol.">
        <title>Complete genome sequence of Erythrobacter litoralis HTCC2594.</title>
        <authorList>
            <person name="Oh H.M."/>
            <person name="Giovannoni S.J."/>
            <person name="Ferriera S."/>
            <person name="Johnson J."/>
            <person name="Cho J.C."/>
        </authorList>
    </citation>
    <scope>NUCLEOTIDE SEQUENCE [LARGE SCALE GENOMIC DNA]</scope>
    <source>
        <strain>HTCC2594</strain>
    </source>
</reference>
<comment type="function">
    <text evidence="1">Produces ATP from ADP in the presence of a proton gradient across the membrane. The catalytic sites are hosted primarily by the beta subunits.</text>
</comment>
<comment type="catalytic activity">
    <reaction evidence="1">
        <text>ATP + H2O + 4 H(+)(in) = ADP + phosphate + 5 H(+)(out)</text>
        <dbReference type="Rhea" id="RHEA:57720"/>
        <dbReference type="ChEBI" id="CHEBI:15377"/>
        <dbReference type="ChEBI" id="CHEBI:15378"/>
        <dbReference type="ChEBI" id="CHEBI:30616"/>
        <dbReference type="ChEBI" id="CHEBI:43474"/>
        <dbReference type="ChEBI" id="CHEBI:456216"/>
        <dbReference type="EC" id="7.1.2.2"/>
    </reaction>
</comment>
<comment type="subunit">
    <text evidence="1">F-type ATPases have 2 components, CF(1) - the catalytic core - and CF(0) - the membrane proton channel. CF(1) has five subunits: alpha(3), beta(3), gamma(1), delta(1), epsilon(1). CF(0) has four main subunits: a(1), b(1), b'(1) and c(9-12).</text>
</comment>
<comment type="subcellular location">
    <subcellularLocation>
        <location evidence="1">Cell inner membrane</location>
        <topology evidence="1">Peripheral membrane protein</topology>
    </subcellularLocation>
</comment>
<comment type="similarity">
    <text evidence="1">Belongs to the ATPase alpha/beta chains family.</text>
</comment>
<dbReference type="EC" id="7.1.2.2" evidence="1"/>
<dbReference type="EMBL" id="CP000157">
    <property type="protein sequence ID" value="ABC63849.1"/>
    <property type="molecule type" value="Genomic_DNA"/>
</dbReference>
<dbReference type="RefSeq" id="WP_011414679.1">
    <property type="nucleotide sequence ID" value="NC_007722.1"/>
</dbReference>
<dbReference type="SMR" id="Q2N8Z2"/>
<dbReference type="STRING" id="314225.ELI_08785"/>
<dbReference type="KEGG" id="eli:ELI_08785"/>
<dbReference type="eggNOG" id="COG0055">
    <property type="taxonomic scope" value="Bacteria"/>
</dbReference>
<dbReference type="HOGENOM" id="CLU_022398_0_2_5"/>
<dbReference type="OrthoDB" id="9801639at2"/>
<dbReference type="Proteomes" id="UP000008808">
    <property type="component" value="Chromosome"/>
</dbReference>
<dbReference type="GO" id="GO:0005886">
    <property type="term" value="C:plasma membrane"/>
    <property type="evidence" value="ECO:0007669"/>
    <property type="project" value="UniProtKB-SubCell"/>
</dbReference>
<dbReference type="GO" id="GO:0045259">
    <property type="term" value="C:proton-transporting ATP synthase complex"/>
    <property type="evidence" value="ECO:0007669"/>
    <property type="project" value="UniProtKB-KW"/>
</dbReference>
<dbReference type="GO" id="GO:0005524">
    <property type="term" value="F:ATP binding"/>
    <property type="evidence" value="ECO:0007669"/>
    <property type="project" value="UniProtKB-UniRule"/>
</dbReference>
<dbReference type="GO" id="GO:0016887">
    <property type="term" value="F:ATP hydrolysis activity"/>
    <property type="evidence" value="ECO:0007669"/>
    <property type="project" value="InterPro"/>
</dbReference>
<dbReference type="GO" id="GO:0046933">
    <property type="term" value="F:proton-transporting ATP synthase activity, rotational mechanism"/>
    <property type="evidence" value="ECO:0007669"/>
    <property type="project" value="UniProtKB-UniRule"/>
</dbReference>
<dbReference type="CDD" id="cd18110">
    <property type="entry name" value="ATP-synt_F1_beta_C"/>
    <property type="match status" value="1"/>
</dbReference>
<dbReference type="CDD" id="cd18115">
    <property type="entry name" value="ATP-synt_F1_beta_N"/>
    <property type="match status" value="1"/>
</dbReference>
<dbReference type="CDD" id="cd01133">
    <property type="entry name" value="F1-ATPase_beta_CD"/>
    <property type="match status" value="1"/>
</dbReference>
<dbReference type="FunFam" id="1.10.1140.10:FF:000001">
    <property type="entry name" value="ATP synthase subunit beta"/>
    <property type="match status" value="1"/>
</dbReference>
<dbReference type="FunFam" id="2.40.10.170:FF:000005">
    <property type="entry name" value="ATP synthase subunit beta"/>
    <property type="match status" value="1"/>
</dbReference>
<dbReference type="FunFam" id="3.40.50.300:FF:000026">
    <property type="entry name" value="ATP synthase subunit beta"/>
    <property type="match status" value="1"/>
</dbReference>
<dbReference type="Gene3D" id="2.40.10.170">
    <property type="match status" value="1"/>
</dbReference>
<dbReference type="Gene3D" id="1.10.1140.10">
    <property type="entry name" value="Bovine Mitochondrial F1-atpase, Atp Synthase Beta Chain, Chain D, domain 3"/>
    <property type="match status" value="1"/>
</dbReference>
<dbReference type="Gene3D" id="3.40.50.300">
    <property type="entry name" value="P-loop containing nucleotide triphosphate hydrolases"/>
    <property type="match status" value="1"/>
</dbReference>
<dbReference type="HAMAP" id="MF_01347">
    <property type="entry name" value="ATP_synth_beta_bact"/>
    <property type="match status" value="1"/>
</dbReference>
<dbReference type="InterPro" id="IPR003593">
    <property type="entry name" value="AAA+_ATPase"/>
</dbReference>
<dbReference type="InterPro" id="IPR055190">
    <property type="entry name" value="ATP-synt_VA_C"/>
</dbReference>
<dbReference type="InterPro" id="IPR005722">
    <property type="entry name" value="ATP_synth_F1_bsu"/>
</dbReference>
<dbReference type="InterPro" id="IPR020003">
    <property type="entry name" value="ATPase_a/bsu_AS"/>
</dbReference>
<dbReference type="InterPro" id="IPR050053">
    <property type="entry name" value="ATPase_alpha/beta_chains"/>
</dbReference>
<dbReference type="InterPro" id="IPR004100">
    <property type="entry name" value="ATPase_F1/V1/A1_a/bsu_N"/>
</dbReference>
<dbReference type="InterPro" id="IPR036121">
    <property type="entry name" value="ATPase_F1/V1/A1_a/bsu_N_sf"/>
</dbReference>
<dbReference type="InterPro" id="IPR000194">
    <property type="entry name" value="ATPase_F1/V1/A1_a/bsu_nucl-bd"/>
</dbReference>
<dbReference type="InterPro" id="IPR024034">
    <property type="entry name" value="ATPase_F1/V1_b/a_C"/>
</dbReference>
<dbReference type="InterPro" id="IPR027417">
    <property type="entry name" value="P-loop_NTPase"/>
</dbReference>
<dbReference type="NCBIfam" id="TIGR01039">
    <property type="entry name" value="atpD"/>
    <property type="match status" value="1"/>
</dbReference>
<dbReference type="PANTHER" id="PTHR15184">
    <property type="entry name" value="ATP SYNTHASE"/>
    <property type="match status" value="1"/>
</dbReference>
<dbReference type="PANTHER" id="PTHR15184:SF71">
    <property type="entry name" value="ATP SYNTHASE SUBUNIT BETA, MITOCHONDRIAL"/>
    <property type="match status" value="1"/>
</dbReference>
<dbReference type="Pfam" id="PF00006">
    <property type="entry name" value="ATP-synt_ab"/>
    <property type="match status" value="1"/>
</dbReference>
<dbReference type="Pfam" id="PF02874">
    <property type="entry name" value="ATP-synt_ab_N"/>
    <property type="match status" value="1"/>
</dbReference>
<dbReference type="Pfam" id="PF22919">
    <property type="entry name" value="ATP-synt_VA_C"/>
    <property type="match status" value="1"/>
</dbReference>
<dbReference type="PIRSF" id="PIRSF039072">
    <property type="entry name" value="ATPase_subunit_beta"/>
    <property type="match status" value="1"/>
</dbReference>
<dbReference type="SMART" id="SM00382">
    <property type="entry name" value="AAA"/>
    <property type="match status" value="1"/>
</dbReference>
<dbReference type="SUPFAM" id="SSF47917">
    <property type="entry name" value="C-terminal domain of alpha and beta subunits of F1 ATP synthase"/>
    <property type="match status" value="1"/>
</dbReference>
<dbReference type="SUPFAM" id="SSF50615">
    <property type="entry name" value="N-terminal domain of alpha and beta subunits of F1 ATP synthase"/>
    <property type="match status" value="1"/>
</dbReference>
<dbReference type="SUPFAM" id="SSF52540">
    <property type="entry name" value="P-loop containing nucleoside triphosphate hydrolases"/>
    <property type="match status" value="1"/>
</dbReference>
<dbReference type="PROSITE" id="PS00152">
    <property type="entry name" value="ATPASE_ALPHA_BETA"/>
    <property type="match status" value="1"/>
</dbReference>